<dbReference type="EC" id="3.1.1.96" evidence="2 9"/>
<dbReference type="EMBL" id="LN999945">
    <property type="protein sequence ID" value="CZT98748.1"/>
    <property type="molecule type" value="Genomic_DNA"/>
</dbReference>
<dbReference type="RefSeq" id="XP_001347770.1">
    <property type="nucleotide sequence ID" value="XM_001347734.1"/>
</dbReference>
<dbReference type="PDB" id="3KNF">
    <property type="method" value="X-ray"/>
    <property type="resolution" value="3.00 A"/>
    <property type="chains" value="A/B/C/D/E/F=1-164"/>
</dbReference>
<dbReference type="PDB" id="3KNP">
    <property type="method" value="X-ray"/>
    <property type="resolution" value="3.30 A"/>
    <property type="chains" value="A/B/C/D/E/F=1-164"/>
</dbReference>
<dbReference type="PDB" id="3KO3">
    <property type="method" value="X-ray"/>
    <property type="resolution" value="2.80 A"/>
    <property type="chains" value="A/B/C/D/E/F=1-164"/>
</dbReference>
<dbReference type="PDB" id="3KO4">
    <property type="method" value="X-ray"/>
    <property type="resolution" value="2.70 A"/>
    <property type="chains" value="A/B/C/D/E/F=1-164"/>
</dbReference>
<dbReference type="PDB" id="3KO5">
    <property type="method" value="X-ray"/>
    <property type="resolution" value="2.09 A"/>
    <property type="chains" value="A/B/C/D/E/F=1-164"/>
</dbReference>
<dbReference type="PDB" id="3KO7">
    <property type="method" value="X-ray"/>
    <property type="resolution" value="2.21 A"/>
    <property type="chains" value="A/B/C/D/E/F=1-164"/>
</dbReference>
<dbReference type="PDB" id="3KO9">
    <property type="method" value="X-ray"/>
    <property type="resolution" value="2.75 A"/>
    <property type="chains" value="A/B/C/D/E/F=1-164"/>
</dbReference>
<dbReference type="PDB" id="3KOB">
    <property type="method" value="X-ray"/>
    <property type="resolution" value="2.99 A"/>
    <property type="chains" value="A/B/C/D/E/F=1-164"/>
</dbReference>
<dbReference type="PDB" id="3KOC">
    <property type="method" value="X-ray"/>
    <property type="resolution" value="2.91 A"/>
    <property type="chains" value="A/B/C/D/E/F=1-164"/>
</dbReference>
<dbReference type="PDB" id="3KOD">
    <property type="method" value="X-ray"/>
    <property type="resolution" value="3.00 A"/>
    <property type="chains" value="A/B/C/D/E/F=1-164"/>
</dbReference>
<dbReference type="PDB" id="3LMT">
    <property type="method" value="X-ray"/>
    <property type="resolution" value="2.75 A"/>
    <property type="chains" value="A/B/C/D/E/F=1-164"/>
</dbReference>
<dbReference type="PDB" id="3LMU">
    <property type="method" value="X-ray"/>
    <property type="resolution" value="3.30 A"/>
    <property type="chains" value="A/B/C/D/E/F/G/H=1-164"/>
</dbReference>
<dbReference type="PDB" id="3LMV">
    <property type="method" value="X-ray"/>
    <property type="resolution" value="2.83 A"/>
    <property type="chains" value="A/B/C/D/E/F=1-164"/>
</dbReference>
<dbReference type="PDB" id="4NBI">
    <property type="method" value="X-ray"/>
    <property type="resolution" value="1.86 A"/>
    <property type="chains" value="A/B=1-164"/>
</dbReference>
<dbReference type="PDB" id="4NBJ">
    <property type="method" value="X-ray"/>
    <property type="resolution" value="2.20 A"/>
    <property type="chains" value="A/B/C/D/E/F/G/H=1-164"/>
</dbReference>
<dbReference type="PDB" id="5J61">
    <property type="method" value="X-ray"/>
    <property type="resolution" value="2.10 A"/>
    <property type="chains" value="A/B/C/D/E/F/G/H=1-164"/>
</dbReference>
<dbReference type="PDBsum" id="3KNF"/>
<dbReference type="PDBsum" id="3KNP"/>
<dbReference type="PDBsum" id="3KO3"/>
<dbReference type="PDBsum" id="3KO4"/>
<dbReference type="PDBsum" id="3KO5"/>
<dbReference type="PDBsum" id="3KO7"/>
<dbReference type="PDBsum" id="3KO9"/>
<dbReference type="PDBsum" id="3KOB"/>
<dbReference type="PDBsum" id="3KOC"/>
<dbReference type="PDBsum" id="3KOD"/>
<dbReference type="PDBsum" id="3LMT"/>
<dbReference type="PDBsum" id="3LMU"/>
<dbReference type="PDBsum" id="3LMV"/>
<dbReference type="PDBsum" id="4NBI"/>
<dbReference type="PDBsum" id="4NBJ"/>
<dbReference type="PDBsum" id="5J61"/>
<dbReference type="SMR" id="Q8IIS0"/>
<dbReference type="FunCoup" id="Q8IIS0">
    <property type="interactions" value="175"/>
</dbReference>
<dbReference type="STRING" id="36329.Q8IIS0"/>
<dbReference type="PaxDb" id="5833-PF11_0095"/>
<dbReference type="EnsemblProtists" id="CZT98748">
    <property type="protein sequence ID" value="CZT98748"/>
    <property type="gene ID" value="PF3D7_1108200"/>
</dbReference>
<dbReference type="GeneID" id="810646"/>
<dbReference type="KEGG" id="pfa:PF3D7_1108200"/>
<dbReference type="VEuPathDB" id="PlasmoDB:PF3D7_1108200"/>
<dbReference type="HOGENOM" id="CLU_076901_0_4_1"/>
<dbReference type="InParanoid" id="Q8IIS0"/>
<dbReference type="OMA" id="VFGADMK"/>
<dbReference type="OrthoDB" id="275783at2759"/>
<dbReference type="PhylomeDB" id="Q8IIS0"/>
<dbReference type="EvolutionaryTrace" id="Q8IIS0"/>
<dbReference type="Proteomes" id="UP000001450">
    <property type="component" value="Chromosome 11"/>
</dbReference>
<dbReference type="GO" id="GO:0005737">
    <property type="term" value="C:cytoplasm"/>
    <property type="evidence" value="ECO:0000314"/>
    <property type="project" value="GeneDB"/>
</dbReference>
<dbReference type="GO" id="GO:0051500">
    <property type="term" value="F:D-tyrosyl-tRNA(Tyr) deacylase activity"/>
    <property type="evidence" value="ECO:0000314"/>
    <property type="project" value="UniProtKB"/>
</dbReference>
<dbReference type="GO" id="GO:0106026">
    <property type="term" value="F:Gly-tRNA(Ala) deacylase activity"/>
    <property type="evidence" value="ECO:0000314"/>
    <property type="project" value="UniProtKB"/>
</dbReference>
<dbReference type="GO" id="GO:0000166">
    <property type="term" value="F:nucleotide binding"/>
    <property type="evidence" value="ECO:0007669"/>
    <property type="project" value="UniProtKB-KW"/>
</dbReference>
<dbReference type="GO" id="GO:0000049">
    <property type="term" value="F:tRNA binding"/>
    <property type="evidence" value="ECO:0007669"/>
    <property type="project" value="UniProtKB-KW"/>
</dbReference>
<dbReference type="GO" id="GO:0006399">
    <property type="term" value="P:tRNA metabolic process"/>
    <property type="evidence" value="ECO:0000318"/>
    <property type="project" value="GO_Central"/>
</dbReference>
<dbReference type="FunFam" id="3.50.80.10:FF:000006">
    <property type="entry name" value="D-aminoacyl-tRNA deacylase"/>
    <property type="match status" value="1"/>
</dbReference>
<dbReference type="Gene3D" id="3.50.80.10">
    <property type="entry name" value="D-tyrosyl-tRNA(Tyr) deacylase"/>
    <property type="match status" value="1"/>
</dbReference>
<dbReference type="InterPro" id="IPR003732">
    <property type="entry name" value="Daa-tRNA_deacyls_DTD"/>
</dbReference>
<dbReference type="InterPro" id="IPR023509">
    <property type="entry name" value="DTD-like_sf"/>
</dbReference>
<dbReference type="NCBIfam" id="TIGR00256">
    <property type="entry name" value="D-aminoacyl-tRNA deacylase"/>
    <property type="match status" value="1"/>
</dbReference>
<dbReference type="PANTHER" id="PTHR10472:SF5">
    <property type="entry name" value="D-AMINOACYL-TRNA DEACYLASE 1"/>
    <property type="match status" value="1"/>
</dbReference>
<dbReference type="PANTHER" id="PTHR10472">
    <property type="entry name" value="D-TYROSYL-TRNA TYR DEACYLASE"/>
    <property type="match status" value="1"/>
</dbReference>
<dbReference type="Pfam" id="PF02580">
    <property type="entry name" value="Tyr_Deacylase"/>
    <property type="match status" value="1"/>
</dbReference>
<dbReference type="SUPFAM" id="SSF69500">
    <property type="entry name" value="DTD-like"/>
    <property type="match status" value="1"/>
</dbReference>
<proteinExistence type="evidence at protein level"/>
<feature type="chain" id="PRO_0000441703" description="D-aminoacyl-tRNA deacylase">
    <location>
        <begin position="1"/>
        <end position="164"/>
    </location>
</feature>
<feature type="short sequence motif" description="C-terminal adenosine nucleotide of tRNA" evidence="9 13 14">
    <location>
        <begin position="104"/>
        <end position="107"/>
    </location>
</feature>
<feature type="short sequence motif" description="Gly-cisPro motif, allows the protein to recognize chirality of D-amino acids" evidence="2">
    <location>
        <begin position="149"/>
        <end position="150"/>
    </location>
</feature>
<feature type="active site" description="Nucleophile" evidence="9">
    <location>
        <position position="90"/>
    </location>
</feature>
<feature type="binding site" evidence="9 14">
    <location>
        <position position="72"/>
    </location>
    <ligand>
        <name>tRNA</name>
        <dbReference type="ChEBI" id="CHEBI:17843"/>
    </ligand>
    <ligandPart>
        <name>AMP 3'-end residue</name>
        <dbReference type="ChEBI" id="CHEBI:78442"/>
    </ligandPart>
</feature>
<feature type="binding site" evidence="9 13 14">
    <location>
        <position position="89"/>
    </location>
    <ligand>
        <name>tRNA</name>
        <dbReference type="ChEBI" id="CHEBI:17843"/>
    </ligand>
    <ligandPart>
        <name>AMP 3'-end residue</name>
        <dbReference type="ChEBI" id="CHEBI:78442"/>
    </ligandPart>
</feature>
<feature type="mutagenesis site" description="Partial loss of deacylation of D-tyrosyl-tRNA(Tyr)." evidence="2">
    <original>S</original>
    <variation>A</variation>
    <location>
        <position position="87"/>
    </location>
</feature>
<feature type="mutagenesis site" description="Wild-type deacylation of D-tyrosyl-tRNA(Tyr)." evidence="2">
    <original>S</original>
    <variation>P</variation>
    <location>
        <position position="87"/>
    </location>
</feature>
<feature type="mutagenesis site" description="Wild-type deacylation of D-tyrosyl-tRNA(Tyr)." evidence="2">
    <original>Q</original>
    <variation>A</variation>
    <variation>E</variation>
    <variation>N</variation>
    <location>
        <position position="88"/>
    </location>
</feature>
<feature type="mutagenesis site" description="Wild-type deacylation of D-tyrosyl-tRNA(Tyr)." evidence="2">
    <original>T</original>
    <variation>A</variation>
    <variation>S</variation>
    <location>
        <position position="90"/>
    </location>
</feature>
<feature type="mutagenesis site" description="Loss of deacylation of D-tyrosyl-tRNA(Tyr), loss of deacylation of glycyl-tRNA(Gly), not toxic upon overexpression." evidence="2 3">
    <original>A</original>
    <variation>F</variation>
    <location>
        <position position="112"/>
    </location>
</feature>
<feature type="mutagenesis site" description="Loss of deacylation of D-tyrosyl-tRNA(Tyr), loss of deacylation of glycyl-tRNA(Gly)." evidence="2 3">
    <original>F</original>
    <variation>A</variation>
    <location>
        <position position="137"/>
    </location>
</feature>
<feature type="mutagenesis site" description="Loss of deacylation of D-tyrosyl-tRNA(Tyr)." evidence="2">
    <original>G</original>
    <variation>A</variation>
    <location>
        <position position="149"/>
    </location>
</feature>
<feature type="mutagenesis site" description="Loss of deacylation of D-tyrosyl-tRNA(Tyr)." evidence="2">
    <original>P</original>
    <variation>A</variation>
    <location>
        <position position="150"/>
    </location>
</feature>
<feature type="strand" evidence="30">
    <location>
        <begin position="2"/>
        <end position="16"/>
    </location>
</feature>
<feature type="strand" evidence="28">
    <location>
        <begin position="22"/>
        <end position="24"/>
    </location>
</feature>
<feature type="strand" evidence="30">
    <location>
        <begin position="27"/>
        <end position="42"/>
    </location>
</feature>
<feature type="helix" evidence="30">
    <location>
        <begin position="49"/>
        <end position="61"/>
    </location>
</feature>
<feature type="strand" evidence="27">
    <location>
        <begin position="65"/>
        <end position="67"/>
    </location>
</feature>
<feature type="strand" evidence="27">
    <location>
        <begin position="70"/>
        <end position="74"/>
    </location>
</feature>
<feature type="turn" evidence="30">
    <location>
        <begin position="76"/>
        <end position="80"/>
    </location>
</feature>
<feature type="strand" evidence="30">
    <location>
        <begin position="82"/>
        <end position="87"/>
    </location>
</feature>
<feature type="helix" evidence="30">
    <location>
        <begin position="89"/>
        <end position="92"/>
    </location>
</feature>
<feature type="strand" evidence="30">
    <location>
        <begin position="96"/>
        <end position="100"/>
    </location>
</feature>
<feature type="strand" evidence="26">
    <location>
        <begin position="104"/>
        <end position="106"/>
    </location>
</feature>
<feature type="helix" evidence="30">
    <location>
        <begin position="109"/>
        <end position="126"/>
    </location>
</feature>
<feature type="helix" evidence="30">
    <location>
        <begin position="129"/>
        <end position="131"/>
    </location>
</feature>
<feature type="strand" evidence="30">
    <location>
        <begin position="132"/>
        <end position="134"/>
    </location>
</feature>
<feature type="strand" evidence="29">
    <location>
        <begin position="137"/>
        <end position="139"/>
    </location>
</feature>
<feature type="strand" evidence="30">
    <location>
        <begin position="141"/>
        <end position="156"/>
    </location>
</feature>
<feature type="helix" evidence="30">
    <location>
        <begin position="157"/>
        <end position="159"/>
    </location>
</feature>
<keyword id="KW-0002">3D-structure</keyword>
<keyword id="KW-0963">Cytoplasm</keyword>
<keyword id="KW-0378">Hydrolase</keyword>
<keyword id="KW-0547">Nucleotide-binding</keyword>
<keyword id="KW-1185">Reference proteome</keyword>
<keyword id="KW-0694">RNA-binding</keyword>
<keyword id="KW-0820">tRNA-binding</keyword>
<comment type="function">
    <text evidence="1 2 3 4">D-aminoacyl-tRNA deacylase, with no observable activity on tRNAs charged with their cognate L-amino acid (PubMed:20007323, PubMed:24302572, PubMed:27224426). Probably acts by rejecting L-amino acids from its binding site rather than specific recognition of D-amino acids (PubMed:27224426). Catalyzes the hydrolysis of D-tyrosyl-tRNA(Tyr), has no activity on correctly charged L-tyrosyl-tRNA(Tyr) (PubMed:20007323, PubMed:24302572, PubMed:27224426). Hydrolyzes correctly charged, achiral, glycyl-tRNA(Gly) (PubMed:27224426). Deacylates mischarged D.melanogaster and E.coli glycyl-tRNA(Ala) (PubMed:28362257). Probably acts via tRNA-based rather than protein-based catalysis (PubMed:24302572, PubMed:27224426). Acts on tRNAs only when the D-amino acid is either attached to the ribose 3'-OH or transferred to the 3'-OH from the 2'-OH through rapid transesterification (PubMed:24302572). Binds a number of other D-amino acids (D-Arg, D-Glu, D-His, D-Lys, D-Ser), suggesting it may also deacylate other mischarged tRNAs (PubMed:20007323).</text>
</comment>
<comment type="catalytic activity">
    <reaction evidence="4">
        <text>glycyl-tRNA(Ala) + H2O = tRNA(Ala) + glycine + H(+)</text>
        <dbReference type="Rhea" id="RHEA:53744"/>
        <dbReference type="Rhea" id="RHEA-COMP:9657"/>
        <dbReference type="Rhea" id="RHEA-COMP:13640"/>
        <dbReference type="ChEBI" id="CHEBI:15377"/>
        <dbReference type="ChEBI" id="CHEBI:15378"/>
        <dbReference type="ChEBI" id="CHEBI:57305"/>
        <dbReference type="ChEBI" id="CHEBI:78442"/>
        <dbReference type="ChEBI" id="CHEBI:78522"/>
        <dbReference type="EC" id="3.1.1.96"/>
    </reaction>
</comment>
<comment type="catalytic activity">
    <reaction evidence="2 9">
        <text>a D-aminoacyl-tRNA + H2O = a tRNA + a D-alpha-amino acid + H(+)</text>
        <dbReference type="Rhea" id="RHEA:13953"/>
        <dbReference type="Rhea" id="RHEA-COMP:10123"/>
        <dbReference type="Rhea" id="RHEA-COMP:10124"/>
        <dbReference type="ChEBI" id="CHEBI:15377"/>
        <dbReference type="ChEBI" id="CHEBI:15378"/>
        <dbReference type="ChEBI" id="CHEBI:59871"/>
        <dbReference type="ChEBI" id="CHEBI:78442"/>
        <dbReference type="ChEBI" id="CHEBI:79333"/>
        <dbReference type="EC" id="3.1.1.96"/>
    </reaction>
</comment>
<comment type="catalytic activity">
    <reaction evidence="1 2 3">
        <text>D-tyrosyl-tRNA(Tyr) + H2O = D-tyrosine + tRNA(Tyr)</text>
        <dbReference type="Rhea" id="RHEA:25347"/>
        <dbReference type="Rhea" id="RHEA-COMP:9707"/>
        <dbReference type="Rhea" id="RHEA-COMP:9872"/>
        <dbReference type="ChEBI" id="CHEBI:15377"/>
        <dbReference type="ChEBI" id="CHEBI:58570"/>
        <dbReference type="ChEBI" id="CHEBI:78442"/>
        <dbReference type="ChEBI" id="CHEBI:78723"/>
    </reaction>
</comment>
<comment type="subunit">
    <text evidence="1 2">Homodimer (PubMed:20007323, PubMed:24302572).</text>
</comment>
<comment type="subcellular location">
    <subcellularLocation>
        <location evidence="1">Cytoplasm</location>
    </subcellularLocation>
</comment>
<comment type="domain">
    <text evidence="2 3">A Gly-cisPro motif from one monomer fits into the active site of the other monomer to allow specific chiral rejection of L-amino acids (PubMed:24302572, PubMed:27224426).</text>
</comment>
<comment type="miscellaneous">
    <text evidence="9">In the crystal structures with bound ADP (PDB 3KO4, 3KO5), the adenosine moiety is thought to represent the authentic C-terminal adenosine of charged tRNA and is annotated as such in this entry (PubMed:20007323).</text>
</comment>
<comment type="similarity">
    <text>Belongs to the DTD family.</text>
</comment>
<comment type="caution">
    <text evidence="2">Initially the conserved reside Thr-90 was thought to be a nucleophile; mutagenesis in this organism and E.coli indicates it is not.</text>
</comment>
<protein>
    <recommendedName>
        <fullName>D-aminoacyl-tRNA deacylase</fullName>
        <shortName evidence="6">PfDTD</shortName>
        <ecNumber evidence="2 9">3.1.1.96</ecNumber>
    </recommendedName>
    <alternativeName>
        <fullName evidence="6">D-Tyrosyl-tRNA(Tyr) deacylase</fullName>
    </alternativeName>
    <alternativeName>
        <fullName evidence="8">Gly-tRNA(Ala) deacylase</fullName>
    </alternativeName>
    <alternativeName>
        <fullName evidence="7">Gly-tRNA(Gly) deacylase</fullName>
    </alternativeName>
</protein>
<accession>Q8IIS0</accession>
<evidence type="ECO:0000269" key="1">
    <source>
    </source>
</evidence>
<evidence type="ECO:0000269" key="2">
    <source>
    </source>
</evidence>
<evidence type="ECO:0000269" key="3">
    <source>
    </source>
</evidence>
<evidence type="ECO:0000269" key="4">
    <source>
    </source>
</evidence>
<evidence type="ECO:0000303" key="5">
    <source>
    </source>
</evidence>
<evidence type="ECO:0000303" key="6">
    <source>
    </source>
</evidence>
<evidence type="ECO:0000303" key="7">
    <source>
    </source>
</evidence>
<evidence type="ECO:0000303" key="8">
    <source>
    </source>
</evidence>
<evidence type="ECO:0000305" key="9">
    <source>
    </source>
</evidence>
<evidence type="ECO:0007744" key="10">
    <source>
        <dbReference type="PDB" id="3KNF"/>
    </source>
</evidence>
<evidence type="ECO:0007744" key="11">
    <source>
        <dbReference type="PDB" id="3KNP"/>
    </source>
</evidence>
<evidence type="ECO:0007744" key="12">
    <source>
        <dbReference type="PDB" id="3KO3"/>
    </source>
</evidence>
<evidence type="ECO:0007744" key="13">
    <source>
        <dbReference type="PDB" id="3KO4"/>
    </source>
</evidence>
<evidence type="ECO:0007744" key="14">
    <source>
        <dbReference type="PDB" id="3KO5"/>
    </source>
</evidence>
<evidence type="ECO:0007744" key="15">
    <source>
        <dbReference type="PDB" id="3KO7"/>
    </source>
</evidence>
<evidence type="ECO:0007744" key="16">
    <source>
        <dbReference type="PDB" id="3KO9"/>
    </source>
</evidence>
<evidence type="ECO:0007744" key="17">
    <source>
        <dbReference type="PDB" id="3KOB"/>
    </source>
</evidence>
<evidence type="ECO:0007744" key="18">
    <source>
        <dbReference type="PDB" id="3KOC"/>
    </source>
</evidence>
<evidence type="ECO:0007744" key="19">
    <source>
        <dbReference type="PDB" id="3KOD"/>
    </source>
</evidence>
<evidence type="ECO:0007744" key="20">
    <source>
        <dbReference type="PDB" id="3LMT"/>
    </source>
</evidence>
<evidence type="ECO:0007744" key="21">
    <source>
        <dbReference type="PDB" id="3LMU"/>
    </source>
</evidence>
<evidence type="ECO:0007744" key="22">
    <source>
        <dbReference type="PDB" id="3LMV"/>
    </source>
</evidence>
<evidence type="ECO:0007744" key="23">
    <source>
        <dbReference type="PDB" id="4NBI"/>
    </source>
</evidence>
<evidence type="ECO:0007744" key="24">
    <source>
        <dbReference type="PDB" id="4NBJ"/>
    </source>
</evidence>
<evidence type="ECO:0007744" key="25">
    <source>
        <dbReference type="PDB" id="5J61"/>
    </source>
</evidence>
<evidence type="ECO:0007829" key="26">
    <source>
        <dbReference type="PDB" id="3KO4"/>
    </source>
</evidence>
<evidence type="ECO:0007829" key="27">
    <source>
        <dbReference type="PDB" id="3KO5"/>
    </source>
</evidence>
<evidence type="ECO:0007829" key="28">
    <source>
        <dbReference type="PDB" id="3KO9"/>
    </source>
</evidence>
<evidence type="ECO:0007829" key="29">
    <source>
        <dbReference type="PDB" id="3KOC"/>
    </source>
</evidence>
<evidence type="ECO:0007829" key="30">
    <source>
        <dbReference type="PDB" id="4NBI"/>
    </source>
</evidence>
<sequence>MRVVIQRVKGAILSVRKENIGENEKELEIISEIKNGLICFLGIHKNDTWEDALYIIRKCLNLRLWNNDNKTWDKNVKDLNYELLIVSQFTLFGNTKKGNKPDFHLAKEPNEALIFYNKIIDEFKKQYNDDKIKIGKFGNYMNIDVTNDGPVTIYIDTHDINLNK</sequence>
<gene>
    <name evidence="5" type="primary">DTD</name>
    <name type="ORF">PF11_0095</name>
    <name type="ORF">PF3D7_1108200</name>
</gene>
<reference key="1">
    <citation type="journal article" date="2002" name="Nature">
        <title>Genome sequence of the human malaria parasite Plasmodium falciparum.</title>
        <authorList>
            <person name="Gardner M.J."/>
            <person name="Hall N."/>
            <person name="Fung E."/>
            <person name="White O."/>
            <person name="Berriman M."/>
            <person name="Hyman R.W."/>
            <person name="Carlton J.M."/>
            <person name="Pain A."/>
            <person name="Nelson K.E."/>
            <person name="Bowman S."/>
            <person name="Paulsen I.T."/>
            <person name="James K.D."/>
            <person name="Eisen J.A."/>
            <person name="Rutherford K.M."/>
            <person name="Salzberg S.L."/>
            <person name="Craig A."/>
            <person name="Kyes S."/>
            <person name="Chan M.-S."/>
            <person name="Nene V."/>
            <person name="Shallom S.J."/>
            <person name="Suh B."/>
            <person name="Peterson J."/>
            <person name="Angiuoli S."/>
            <person name="Pertea M."/>
            <person name="Allen J."/>
            <person name="Selengut J."/>
            <person name="Haft D."/>
            <person name="Mather M.W."/>
            <person name="Vaidya A.B."/>
            <person name="Martin D.M.A."/>
            <person name="Fairlamb A.H."/>
            <person name="Fraunholz M.J."/>
            <person name="Roos D.S."/>
            <person name="Ralph S.A."/>
            <person name="McFadden G.I."/>
            <person name="Cummings L.M."/>
            <person name="Subramanian G.M."/>
            <person name="Mungall C."/>
            <person name="Venter J.C."/>
            <person name="Carucci D.J."/>
            <person name="Hoffman S.L."/>
            <person name="Newbold C."/>
            <person name="Davis R.W."/>
            <person name="Fraser C.M."/>
            <person name="Barrell B.G."/>
        </authorList>
    </citation>
    <scope>NUCLEOTIDE SEQUENCE [LARGE SCALE GENOMIC DNA]</scope>
    <source>
        <strain>3D7</strain>
    </source>
</reference>
<reference key="2">
    <citation type="journal article" date="2017" name="Elife">
        <title>Role of D-aminoacyl-tRNA deacylase beyond chiral proofreading as a cellular defense against glycine mischarging by AlaRS.</title>
        <authorList>
            <person name="Pawar K.I."/>
            <person name="Suma K."/>
            <person name="Seenivasan A."/>
            <person name="Kuncha S.K."/>
            <person name="Routh S.B."/>
            <person name="Kruparani S.P."/>
            <person name="Sankaranarayanan R."/>
        </authorList>
    </citation>
    <scope>FUNCTION</scope>
    <scope>CATALYTIC ACTIVITY</scope>
</reference>
<reference evidence="20 21 22" key="3">
    <citation type="journal article" date="2010" name="Acta Crystallogr. D">
        <title>Structure of D-tyrosyl-tRNATyr deacylase using home-source Cu Kalpha and moderate-quality iodide-SAD data: structural polymorphism and HEPES-bound enzyme states.</title>
        <authorList>
            <person name="Yogavel M."/>
            <person name="Khan S."/>
            <person name="Bhatt T.K."/>
            <person name="Sharma A."/>
        </authorList>
    </citation>
    <scope>X-RAY CRYSTALLOGRAPHY (2.75 ANGSTROMS)</scope>
</reference>
<reference evidence="10 11 12 13 14 15 16 17 18 19" key="4">
    <citation type="journal article" date="2010" name="J. Biol. Chem.">
        <title>Ligand-bound structures provide atomic snapshots for the catalytic mechanism of D-amino acid deacylase.</title>
        <authorList>
            <person name="Bhatt T.K."/>
            <person name="Yogavel M."/>
            <person name="Wydau S."/>
            <person name="Berwal R."/>
            <person name="Sharma A."/>
        </authorList>
    </citation>
    <scope>X-RAY CRYSTALLOGRAPHY (2.09 ANGSTROMS) IN COMPLEX WITH D-AMINO ACIDS</scope>
    <scope>FUNCTION</scope>
    <scope>CATALYTIC ACTIVITY</scope>
    <scope>POSSIBLE REACTION MECHANISM</scope>
    <scope>SUBUNIT</scope>
    <scope>SUBCELLULAR LOCATION</scope>
</reference>
<reference evidence="23 24" key="5">
    <citation type="journal article" date="2013" name="Elife">
        <title>Mechanism of chiral proofreading during translation of the genetic code.</title>
        <authorList>
            <person name="Ahmad S."/>
            <person name="Routh S.B."/>
            <person name="Kamarthapu V."/>
            <person name="Chalissery J."/>
            <person name="Muthukumar S."/>
            <person name="Hussain T."/>
            <person name="Kruparani S.P."/>
            <person name="Deshmukh M.V."/>
            <person name="Sankaranarayanan R."/>
        </authorList>
    </citation>
    <scope>X-RAY CRYSTALLOGRAPHY (1.86 ANGSTROMS) IN COMPLEX WITH SUBSTRATE ANALOG</scope>
    <scope>FUNCTION</scope>
    <scope>POSSIBLE REACTION MECHANISM</scope>
    <scope>SUBUNIT</scope>
    <scope>DOMAIN</scope>
    <scope>MUTAGENESIS OF SER-87; GLN-88; THR-90; ALA-112; PHE-137; GLY-149 AND PRO-150</scope>
</reference>
<reference evidence="25" key="6">
    <citation type="journal article" date="2016" name="PLoS Biol.">
        <title>Elongation factor Tu prevents misediting of Gly-tRNA(Gly) caused by the design behind the chiral proofreading site of D-aminoacyl-tRNA deacylase.</title>
        <authorList>
            <person name="Routh S.B."/>
            <person name="Pawar K.I."/>
            <person name="Ahmad S."/>
            <person name="Singh S."/>
            <person name="Suma K."/>
            <person name="Kumar M."/>
            <person name="Kuncha S.K."/>
            <person name="Yadav K."/>
            <person name="Kruparani S.P."/>
            <person name="Sankaranarayanan R."/>
        </authorList>
    </citation>
    <scope>X-RAY CRYSTALLOGRAPHY (2.10 ANGSTROMS) IN COMPLEX WITH GLY SUBSTRATE ANALOG</scope>
    <scope>FUNCTION</scope>
    <scope>SUBSTRATE SPECIFICITY</scope>
    <scope>MUTAGENESIS OF ALA-112 AND PHE-137</scope>
</reference>
<name>DTD_PLAF7</name>
<organism>
    <name type="scientific">Plasmodium falciparum (isolate 3D7)</name>
    <dbReference type="NCBI Taxonomy" id="36329"/>
    <lineage>
        <taxon>Eukaryota</taxon>
        <taxon>Sar</taxon>
        <taxon>Alveolata</taxon>
        <taxon>Apicomplexa</taxon>
        <taxon>Aconoidasida</taxon>
        <taxon>Haemosporida</taxon>
        <taxon>Plasmodiidae</taxon>
        <taxon>Plasmodium</taxon>
        <taxon>Plasmodium (Laverania)</taxon>
    </lineage>
</organism>